<protein>
    <recommendedName>
        <fullName>FERM, ARHGEF and pleckstrin domain-containing protein 2</fullName>
    </recommendedName>
    <alternativeName>
        <fullName>FERM domain-including RhoGEF</fullName>
        <shortName>FIR</shortName>
    </alternativeName>
    <alternativeName>
        <fullName>FERM, RhoGEF and pleckstrin domain-containing protein 2</fullName>
    </alternativeName>
    <alternativeName>
        <fullName>Pleckstrin homology domain-containing family C member 3</fullName>
        <shortName>PH domain-containing family C member 3</shortName>
    </alternativeName>
</protein>
<comment type="function">
    <text evidence="1">Functions as a guanine nucleotide exchange factor that activates RAC1. May have relatively low activity. Plays a role in the response to class 3 semaphorins and remodeling of the actin cytoskeleton. Plays a role in TNFSF11-mediated osteoclast differentiation, especially in podosome rearrangement and reorganization of the actin cytoskeleton. Regulates the activation of ITGB3, integrin signaling and cell adhesion (By similarity).</text>
</comment>
<comment type="subunit">
    <text evidence="1">Interacts with PLXNA1. Interaction with PLXNA1 or PIP5K1C lowers its guanine nucleotide exchange activity. Dissociates from PLXNA1 when SEMA3A binds to the receptor. Interacts with PIP5K1C via its FERM domain. The interaction with PIP5K1C is enhanced by SEMA3A binding. Interacts with RAC1 (By similarity).</text>
</comment>
<comment type="alternative products">
    <event type="alternative splicing"/>
    <isoform>
        <id>O94887-1</id>
        <name>1</name>
        <sequence type="displayed"/>
    </isoform>
    <isoform>
        <id>O94887-2</id>
        <name>2</name>
        <sequence type="described" ref="VSP_017977 VSP_017978"/>
    </isoform>
    <isoform>
        <id>O94887-3</id>
        <name>3</name>
        <sequence type="described" ref="VSP_054840 VSP_054841"/>
    </isoform>
</comment>
<comment type="domain">
    <text evidence="1">Intramolecular interaction between the DH domain and the PH domains can stabilize the protein in an autoinhibited conformation.</text>
</comment>
<comment type="sequence caution" evidence="8">
    <conflict type="erroneous initiation">
        <sequence resource="EMBL-CDS" id="BAA34513"/>
    </conflict>
</comment>
<sequence>MGEIEGTYRVLQTAGMRLGAQTPVGVSTLEPGQTLLPRMQEKHLHLRVKLLDNTMEIFDIEPKCDGQVLLTQVWKRLNLVECDYFGMEFQNTQSYWIWLEPMKPIIRQIRRPKNVVLRLAVKFFPPDPGQLQEEYTRYLFALQLKRDLLEERLTCADTTAALLTSHLLQSEIGDYDETLDREHLKVNEYLPGQQHCLEKILEFHQKHVGQTPAESDFQVLEIARKLEMYGIRFHMASDREGTKIQLAVSHMGVLVFQGTTKINTFNWSKVRKLSFKRKRFLIKLHPEVHGPYQDTLEFLLGSRDECKNFWKICVEYHTFFRLLDQPKPKAKAVFFSRGSSFRYSGRTQKQLVDYFKDSGMKRIPYERRHSKTHTSVRALTADLPKQSISFPEGLRTPASPSSANAFYSLSPSTLVPSGLPEFKDSSSSLTDPQVSYVKSPAAERRSGAVAGGPDTPSAQPLGPPALQPGPGLSTKSPQPSPSSRKSPLSLSPAFQVPLGPAEQGSSPLLSPVLSDAGGAGMDCEEPRHKRVPADEAYFIVKEILATERTYLKDLEVITVWFRSAVVKEDAMPATLMTLLFSNIDPIYEFHRGFLREVEQRLALWEGPSKAHTKGSHQRIGDILLRNMRQLKEFTSYFQRHDEVLTELEKATKRCKKLEAVYKEFELQKVCYLPLNTFLLKPIQRLLHYRLLLRRLCGHYSPGHHDYADCHDALKAITEVTTTLQHILIRLENLQKLTELQRDLVGIENLIAPGREFIREGCLHKLTKKGLQQRMFFLFSDMLLYTSKGVAGTSHFRIRGLLPLQGMLVEESDNEWSVPHCFTIYAAQKTIVVAASTRLEKEKWMLDLNSAIQAAKSGGDTAPALPGRTVCTRPPRSPNEVSLEQESEDDARGVRSSLEGHGQHRANTTMHVCWYRNTSVSRADHSAAVENQLSGYLLRKFKNSHGWQKLWVVFTNFCLFFYKTHQDDYPLASLPLLGYSVSIPREADGIHKDYVFKLQFKSHVYFFRAESKYTFERWMEVIQGASSSAGRAPSIVQDGPQPSSGLEGMVRGKEE</sequence>
<name>FARP2_HUMAN</name>
<accession>O94887</accession>
<accession>B7Z6J8</accession>
<accession>F5GZ84</accession>
<accession>Q53QM5</accession>
<accession>Q8WU27</accession>
<accession>Q9UFE7</accession>
<feature type="chain" id="PRO_0000232755" description="FERM, ARHGEF and pleckstrin domain-containing protein 2">
    <location>
        <begin position="1"/>
        <end position="1054"/>
    </location>
</feature>
<feature type="domain" description="FERM" evidence="3">
    <location>
        <begin position="44"/>
        <end position="324"/>
    </location>
</feature>
<feature type="domain" description="DH" evidence="2">
    <location>
        <begin position="535"/>
        <end position="726"/>
    </location>
</feature>
<feature type="domain" description="PH 1" evidence="4">
    <location>
        <begin position="755"/>
        <end position="852"/>
    </location>
</feature>
<feature type="domain" description="PH 2" evidence="4">
    <location>
        <begin position="929"/>
        <end position="1026"/>
    </location>
</feature>
<feature type="region of interest" description="Disordered" evidence="5">
    <location>
        <begin position="421"/>
        <end position="527"/>
    </location>
</feature>
<feature type="region of interest" description="Disordered" evidence="5">
    <location>
        <begin position="856"/>
        <end position="894"/>
    </location>
</feature>
<feature type="region of interest" description="Disordered" evidence="5">
    <location>
        <begin position="1029"/>
        <end position="1054"/>
    </location>
</feature>
<feature type="compositionally biased region" description="Low complexity" evidence="5">
    <location>
        <begin position="468"/>
        <end position="492"/>
    </location>
</feature>
<feature type="modified residue" description="Phosphoserine" evidence="10">
    <location>
        <position position="389"/>
    </location>
</feature>
<feature type="modified residue" description="Phosphoserine" evidence="9 10">
    <location>
        <position position="439"/>
    </location>
</feature>
<feature type="splice variant" id="VSP_017977" description="In isoform 2." evidence="7">
    <original>EFTSYFQRHDEVLTEL</original>
    <variation>VFQLHEGHVAGVTKME</variation>
    <location>
        <begin position="632"/>
        <end position="647"/>
    </location>
</feature>
<feature type="splice variant" id="VSP_054840" description="In isoform 3." evidence="6">
    <original>EFTSYFQ</original>
    <variation>AAHEFTT</variation>
    <location>
        <begin position="632"/>
        <end position="638"/>
    </location>
</feature>
<feature type="splice variant" id="VSP_054841" description="In isoform 3." evidence="6">
    <location>
        <begin position="639"/>
        <end position="1054"/>
    </location>
</feature>
<feature type="splice variant" id="VSP_017978" description="In isoform 2." evidence="7">
    <location>
        <begin position="648"/>
        <end position="1054"/>
    </location>
</feature>
<feature type="sequence variant" id="VAR_048363" description="In dbSNP:rs16843643.">
    <original>K</original>
    <variation>N</variation>
    <location>
        <position position="185"/>
    </location>
</feature>
<feature type="sequence variant" id="VAR_048364" description="In dbSNP:rs757978.">
    <original>T</original>
    <variation>I</variation>
    <location>
        <position position="260"/>
    </location>
</feature>
<feature type="sequence variant" id="VAR_048365" description="In dbSNP:rs41342147.">
    <original>V</original>
    <variation>I</variation>
    <location>
        <position position="643"/>
    </location>
</feature>
<feature type="sequence conflict" description="In Ref. 2; BAH13284." evidence="8" ref="2">
    <original>E</original>
    <variation>G</variation>
    <location>
        <position position="366"/>
    </location>
</feature>
<proteinExistence type="evidence at protein level"/>
<keyword id="KW-0025">Alternative splicing</keyword>
<keyword id="KW-0344">Guanine-nucleotide releasing factor</keyword>
<keyword id="KW-0597">Phosphoprotein</keyword>
<keyword id="KW-1267">Proteomics identification</keyword>
<keyword id="KW-1185">Reference proteome</keyword>
<keyword id="KW-0677">Repeat</keyword>
<evidence type="ECO:0000250" key="1"/>
<evidence type="ECO:0000255" key="2">
    <source>
        <dbReference type="PROSITE-ProRule" id="PRU00062"/>
    </source>
</evidence>
<evidence type="ECO:0000255" key="3">
    <source>
        <dbReference type="PROSITE-ProRule" id="PRU00084"/>
    </source>
</evidence>
<evidence type="ECO:0000255" key="4">
    <source>
        <dbReference type="PROSITE-ProRule" id="PRU00145"/>
    </source>
</evidence>
<evidence type="ECO:0000256" key="5">
    <source>
        <dbReference type="SAM" id="MobiDB-lite"/>
    </source>
</evidence>
<evidence type="ECO:0000303" key="6">
    <source>
    </source>
</evidence>
<evidence type="ECO:0000303" key="7">
    <source>
    </source>
</evidence>
<evidence type="ECO:0000305" key="8"/>
<evidence type="ECO:0007744" key="9">
    <source>
    </source>
</evidence>
<evidence type="ECO:0007744" key="10">
    <source>
    </source>
</evidence>
<dbReference type="EMBL" id="AB018336">
    <property type="protein sequence ID" value="BAA34513.2"/>
    <property type="status" value="ALT_INIT"/>
    <property type="molecule type" value="mRNA"/>
</dbReference>
<dbReference type="EMBL" id="AK300435">
    <property type="protein sequence ID" value="BAH13284.1"/>
    <property type="molecule type" value="mRNA"/>
</dbReference>
<dbReference type="EMBL" id="AC005104">
    <property type="status" value="NOT_ANNOTATED_CDS"/>
    <property type="molecule type" value="Genomic_DNA"/>
</dbReference>
<dbReference type="EMBL" id="AC110299">
    <property type="protein sequence ID" value="AAY14682.1"/>
    <property type="molecule type" value="Genomic_DNA"/>
</dbReference>
<dbReference type="EMBL" id="BC021301">
    <property type="protein sequence ID" value="AAH21301.1"/>
    <property type="molecule type" value="mRNA"/>
</dbReference>
<dbReference type="EMBL" id="AL122052">
    <property type="protein sequence ID" value="CAB59185.1"/>
    <property type="molecule type" value="mRNA"/>
</dbReference>
<dbReference type="CCDS" id="CCDS33424.1">
    <molecule id="O94887-1"/>
</dbReference>
<dbReference type="CCDS" id="CCDS63197.1">
    <molecule id="O94887-2"/>
</dbReference>
<dbReference type="CCDS" id="CCDS63198.1">
    <molecule id="O94887-3"/>
</dbReference>
<dbReference type="PIR" id="T34541">
    <property type="entry name" value="T34541"/>
</dbReference>
<dbReference type="RefSeq" id="NP_001269912.1">
    <molecule id="O94887-2"/>
    <property type="nucleotide sequence ID" value="NM_001282983.2"/>
</dbReference>
<dbReference type="RefSeq" id="NP_001269913.1">
    <molecule id="O94887-3"/>
    <property type="nucleotide sequence ID" value="NM_001282984.2"/>
</dbReference>
<dbReference type="RefSeq" id="NP_055623.1">
    <molecule id="O94887-1"/>
    <property type="nucleotide sequence ID" value="NM_014808.4"/>
</dbReference>
<dbReference type="RefSeq" id="XP_047302466.1">
    <molecule id="O94887-1"/>
    <property type="nucleotide sequence ID" value="XM_047446510.1"/>
</dbReference>
<dbReference type="RefSeq" id="XP_054200737.1">
    <molecule id="O94887-1"/>
    <property type="nucleotide sequence ID" value="XM_054344762.1"/>
</dbReference>
<dbReference type="SMR" id="O94887"/>
<dbReference type="BioGRID" id="115189">
    <property type="interactions" value="100"/>
</dbReference>
<dbReference type="CORUM" id="O94887"/>
<dbReference type="FunCoup" id="O94887">
    <property type="interactions" value="1407"/>
</dbReference>
<dbReference type="IntAct" id="O94887">
    <property type="interactions" value="57"/>
</dbReference>
<dbReference type="MINT" id="O94887"/>
<dbReference type="STRING" id="9606.ENSP00000264042"/>
<dbReference type="GlyGen" id="O94887">
    <property type="glycosylation" value="1 site, 1 O-linked glycan (1 site)"/>
</dbReference>
<dbReference type="iPTMnet" id="O94887"/>
<dbReference type="PhosphoSitePlus" id="O94887"/>
<dbReference type="SwissPalm" id="O94887"/>
<dbReference type="BioMuta" id="FARP2"/>
<dbReference type="jPOST" id="O94887"/>
<dbReference type="MassIVE" id="O94887"/>
<dbReference type="PaxDb" id="9606-ENSP00000264042"/>
<dbReference type="PeptideAtlas" id="O94887"/>
<dbReference type="ProteomicsDB" id="24958"/>
<dbReference type="ProteomicsDB" id="50524">
    <molecule id="O94887-1"/>
</dbReference>
<dbReference type="ProteomicsDB" id="50525">
    <molecule id="O94887-2"/>
</dbReference>
<dbReference type="Pumba" id="O94887"/>
<dbReference type="Antibodypedia" id="34561">
    <property type="antibodies" value="149 antibodies from 23 providers"/>
</dbReference>
<dbReference type="DNASU" id="9855"/>
<dbReference type="Ensembl" id="ENST00000264042.8">
    <molecule id="O94887-1"/>
    <property type="protein sequence ID" value="ENSP00000264042.3"/>
    <property type="gene ID" value="ENSG00000006607.14"/>
</dbReference>
<dbReference type="Ensembl" id="ENST00000373287.8">
    <molecule id="O94887-2"/>
    <property type="protein sequence ID" value="ENSP00000362384.4"/>
    <property type="gene ID" value="ENSG00000006607.14"/>
</dbReference>
<dbReference type="Ensembl" id="ENST00000627550.2">
    <molecule id="O94887-3"/>
    <property type="protein sequence ID" value="ENSP00000486597.1"/>
    <property type="gene ID" value="ENSG00000006607.14"/>
</dbReference>
<dbReference type="GeneID" id="9855"/>
<dbReference type="KEGG" id="hsa:9855"/>
<dbReference type="MANE-Select" id="ENST00000264042.8">
    <property type="protein sequence ID" value="ENSP00000264042.3"/>
    <property type="RefSeq nucleotide sequence ID" value="NM_014808.4"/>
    <property type="RefSeq protein sequence ID" value="NP_055623.1"/>
</dbReference>
<dbReference type="UCSC" id="uc002wbi.4">
    <molecule id="O94887-1"/>
    <property type="organism name" value="human"/>
</dbReference>
<dbReference type="AGR" id="HGNC:16460"/>
<dbReference type="CTD" id="9855"/>
<dbReference type="DisGeNET" id="9855"/>
<dbReference type="GeneCards" id="FARP2"/>
<dbReference type="HGNC" id="HGNC:16460">
    <property type="gene designation" value="FARP2"/>
</dbReference>
<dbReference type="HPA" id="ENSG00000006607">
    <property type="expression patterns" value="Low tissue specificity"/>
</dbReference>
<dbReference type="MIM" id="617586">
    <property type="type" value="gene"/>
</dbReference>
<dbReference type="neXtProt" id="NX_O94887"/>
<dbReference type="OpenTargets" id="ENSG00000006607"/>
<dbReference type="PharmGKB" id="PA134873245"/>
<dbReference type="VEuPathDB" id="HostDB:ENSG00000006607"/>
<dbReference type="eggNOG" id="KOG3531">
    <property type="taxonomic scope" value="Eukaryota"/>
</dbReference>
<dbReference type="GeneTree" id="ENSGT00940000158642"/>
<dbReference type="HOGENOM" id="CLU_012301_0_0_1"/>
<dbReference type="InParanoid" id="O94887"/>
<dbReference type="OMA" id="HKHMPED"/>
<dbReference type="OrthoDB" id="9990815at2759"/>
<dbReference type="PAN-GO" id="O94887">
    <property type="GO annotations" value="1 GO annotation based on evolutionary models"/>
</dbReference>
<dbReference type="PhylomeDB" id="O94887"/>
<dbReference type="TreeFam" id="TF351276"/>
<dbReference type="PathwayCommons" id="O94887"/>
<dbReference type="Reactome" id="R-HSA-399955">
    <property type="pathway name" value="SEMA3A-Plexin repulsion signaling by inhibiting Integrin adhesion"/>
</dbReference>
<dbReference type="Reactome" id="R-HSA-9013149">
    <property type="pathway name" value="RAC1 GTPase cycle"/>
</dbReference>
<dbReference type="SignaLink" id="O94887"/>
<dbReference type="SIGNOR" id="O94887"/>
<dbReference type="BioGRID-ORCS" id="9855">
    <property type="hits" value="7 hits in 1153 CRISPR screens"/>
</dbReference>
<dbReference type="ChiTaRS" id="FARP2">
    <property type="organism name" value="human"/>
</dbReference>
<dbReference type="GeneWiki" id="FARP2"/>
<dbReference type="GenomeRNAi" id="9855"/>
<dbReference type="Pharos" id="O94887">
    <property type="development level" value="Tbio"/>
</dbReference>
<dbReference type="PRO" id="PR:O94887"/>
<dbReference type="Proteomes" id="UP000005640">
    <property type="component" value="Chromosome 2"/>
</dbReference>
<dbReference type="RNAct" id="O94887">
    <property type="molecule type" value="protein"/>
</dbReference>
<dbReference type="Bgee" id="ENSG00000006607">
    <property type="expression patterns" value="Expressed in colonic epithelium and 175 other cell types or tissues"/>
</dbReference>
<dbReference type="ExpressionAtlas" id="O94887">
    <property type="expression patterns" value="baseline and differential"/>
</dbReference>
<dbReference type="GO" id="GO:0005737">
    <property type="term" value="C:cytoplasm"/>
    <property type="evidence" value="ECO:0000314"/>
    <property type="project" value="MGI"/>
</dbReference>
<dbReference type="GO" id="GO:0005856">
    <property type="term" value="C:cytoskeleton"/>
    <property type="evidence" value="ECO:0007669"/>
    <property type="project" value="InterPro"/>
</dbReference>
<dbReference type="GO" id="GO:0005829">
    <property type="term" value="C:cytosol"/>
    <property type="evidence" value="ECO:0000304"/>
    <property type="project" value="Reactome"/>
</dbReference>
<dbReference type="GO" id="GO:0008092">
    <property type="term" value="F:cytoskeletal protein binding"/>
    <property type="evidence" value="ECO:0007669"/>
    <property type="project" value="InterPro"/>
</dbReference>
<dbReference type="GO" id="GO:0005085">
    <property type="term" value="F:guanyl-nucleotide exchange factor activity"/>
    <property type="evidence" value="ECO:0000314"/>
    <property type="project" value="MGI"/>
</dbReference>
<dbReference type="GO" id="GO:0030036">
    <property type="term" value="P:actin cytoskeleton organization"/>
    <property type="evidence" value="ECO:0000250"/>
    <property type="project" value="UniProtKB"/>
</dbReference>
<dbReference type="GO" id="GO:0007155">
    <property type="term" value="P:cell adhesion"/>
    <property type="evidence" value="ECO:0000250"/>
    <property type="project" value="UniProtKB"/>
</dbReference>
<dbReference type="GO" id="GO:0022405">
    <property type="term" value="P:hair cycle process"/>
    <property type="evidence" value="ECO:0007669"/>
    <property type="project" value="Ensembl"/>
</dbReference>
<dbReference type="GO" id="GO:0016322">
    <property type="term" value="P:neuron remodeling"/>
    <property type="evidence" value="ECO:0000314"/>
    <property type="project" value="MGI"/>
</dbReference>
<dbReference type="GO" id="GO:0030316">
    <property type="term" value="P:osteoclast differentiation"/>
    <property type="evidence" value="ECO:0000250"/>
    <property type="project" value="UniProtKB"/>
</dbReference>
<dbReference type="GO" id="GO:0071800">
    <property type="term" value="P:podosome assembly"/>
    <property type="evidence" value="ECO:0000250"/>
    <property type="project" value="UniProtKB"/>
</dbReference>
<dbReference type="GO" id="GO:0016601">
    <property type="term" value="P:Rac protein signal transduction"/>
    <property type="evidence" value="ECO:0000314"/>
    <property type="project" value="MGI"/>
</dbReference>
<dbReference type="GO" id="GO:0033623">
    <property type="term" value="P:regulation of integrin activation"/>
    <property type="evidence" value="ECO:0000250"/>
    <property type="project" value="UniProtKB"/>
</dbReference>
<dbReference type="GO" id="GO:0071526">
    <property type="term" value="P:semaphorin-plexin signaling pathway"/>
    <property type="evidence" value="ECO:0000250"/>
    <property type="project" value="UniProtKB"/>
</dbReference>
<dbReference type="CDD" id="cd14473">
    <property type="entry name" value="FERM_B-lobe"/>
    <property type="match status" value="1"/>
</dbReference>
<dbReference type="CDD" id="cd13193">
    <property type="entry name" value="FERM_C_FARP1-like"/>
    <property type="match status" value="1"/>
</dbReference>
<dbReference type="CDD" id="cd17190">
    <property type="entry name" value="FERM_F1_FARP2"/>
    <property type="match status" value="1"/>
</dbReference>
<dbReference type="CDD" id="cd01220">
    <property type="entry name" value="PH1_FARP1-like"/>
    <property type="match status" value="1"/>
</dbReference>
<dbReference type="CDD" id="cd13235">
    <property type="entry name" value="PH2_FARP1-like"/>
    <property type="match status" value="1"/>
</dbReference>
<dbReference type="CDD" id="cd00160">
    <property type="entry name" value="RhoGEF"/>
    <property type="match status" value="1"/>
</dbReference>
<dbReference type="FunFam" id="2.30.29.30:FF:000002">
    <property type="entry name" value="Band 4.1-like protein 5 isoform 1"/>
    <property type="match status" value="1"/>
</dbReference>
<dbReference type="FunFam" id="3.10.20.90:FF:000040">
    <property type="entry name" value="FERM, RhoGEF and pleckstrin domain-containing protein"/>
    <property type="match status" value="1"/>
</dbReference>
<dbReference type="FunFam" id="1.20.80.10:FF:000005">
    <property type="entry name" value="FERM, RhoGEF and pleckstrin domain-containing protein 1"/>
    <property type="match status" value="1"/>
</dbReference>
<dbReference type="FunFam" id="2.30.29.30:FF:000046">
    <property type="entry name" value="FERM, RhoGEF and pleckstrin domain-containing protein 1"/>
    <property type="match status" value="1"/>
</dbReference>
<dbReference type="FunFam" id="1.20.900.10:FF:000020">
    <property type="entry name" value="FERM, RhoGEF and pleckstrin domain-containing protein 2"/>
    <property type="match status" value="1"/>
</dbReference>
<dbReference type="Gene3D" id="1.20.80.10">
    <property type="match status" value="1"/>
</dbReference>
<dbReference type="Gene3D" id="1.20.900.10">
    <property type="entry name" value="Dbl homology (DH) domain"/>
    <property type="match status" value="1"/>
</dbReference>
<dbReference type="Gene3D" id="3.10.20.90">
    <property type="entry name" value="Phosphatidylinositol 3-kinase Catalytic Subunit, Chain A, domain 1"/>
    <property type="match status" value="1"/>
</dbReference>
<dbReference type="Gene3D" id="2.30.29.30">
    <property type="entry name" value="Pleckstrin-homology domain (PH domain)/Phosphotyrosine-binding domain (PTB)"/>
    <property type="match status" value="3"/>
</dbReference>
<dbReference type="InterPro" id="IPR019749">
    <property type="entry name" value="Band_41_domain"/>
</dbReference>
<dbReference type="InterPro" id="IPR035899">
    <property type="entry name" value="DBL_dom_sf"/>
</dbReference>
<dbReference type="InterPro" id="IPR000219">
    <property type="entry name" value="DH_dom"/>
</dbReference>
<dbReference type="InterPro" id="IPR000798">
    <property type="entry name" value="Ez/rad/moesin-like"/>
</dbReference>
<dbReference type="InterPro" id="IPR014847">
    <property type="entry name" value="FA"/>
</dbReference>
<dbReference type="InterPro" id="IPR041788">
    <property type="entry name" value="FARP1/FARP2/FRMD7_FERM_C"/>
</dbReference>
<dbReference type="InterPro" id="IPR014352">
    <property type="entry name" value="FERM/acyl-CoA-bd_prot_sf"/>
</dbReference>
<dbReference type="InterPro" id="IPR035963">
    <property type="entry name" value="FERM_2"/>
</dbReference>
<dbReference type="InterPro" id="IPR019748">
    <property type="entry name" value="FERM_central"/>
</dbReference>
<dbReference type="InterPro" id="IPR019747">
    <property type="entry name" value="FERM_CS"/>
</dbReference>
<dbReference type="InterPro" id="IPR000299">
    <property type="entry name" value="FERM_domain"/>
</dbReference>
<dbReference type="InterPro" id="IPR018979">
    <property type="entry name" value="FERM_N"/>
</dbReference>
<dbReference type="InterPro" id="IPR018980">
    <property type="entry name" value="FERM_PH-like_C"/>
</dbReference>
<dbReference type="InterPro" id="IPR011993">
    <property type="entry name" value="PH-like_dom_sf"/>
</dbReference>
<dbReference type="InterPro" id="IPR001849">
    <property type="entry name" value="PH_domain"/>
</dbReference>
<dbReference type="InterPro" id="IPR051835">
    <property type="entry name" value="RAC1-GEF"/>
</dbReference>
<dbReference type="InterPro" id="IPR029071">
    <property type="entry name" value="Ubiquitin-like_domsf"/>
</dbReference>
<dbReference type="PANTHER" id="PTHR45858">
    <property type="entry name" value="FERM DOMAIN CONTAINING PROTEIN"/>
    <property type="match status" value="1"/>
</dbReference>
<dbReference type="PANTHER" id="PTHR45858:SF4">
    <property type="entry name" value="FERM, ARHGEF AND PLECKSTRIN DOMAIN-CONTAINING PROTEIN 2"/>
    <property type="match status" value="1"/>
</dbReference>
<dbReference type="Pfam" id="PF08736">
    <property type="entry name" value="FA"/>
    <property type="match status" value="1"/>
</dbReference>
<dbReference type="Pfam" id="PF09380">
    <property type="entry name" value="FERM_C"/>
    <property type="match status" value="1"/>
</dbReference>
<dbReference type="Pfam" id="PF00373">
    <property type="entry name" value="FERM_M"/>
    <property type="match status" value="1"/>
</dbReference>
<dbReference type="Pfam" id="PF09379">
    <property type="entry name" value="FERM_N"/>
    <property type="match status" value="1"/>
</dbReference>
<dbReference type="Pfam" id="PF00169">
    <property type="entry name" value="PH"/>
    <property type="match status" value="2"/>
</dbReference>
<dbReference type="Pfam" id="PF00621">
    <property type="entry name" value="RhoGEF"/>
    <property type="match status" value="1"/>
</dbReference>
<dbReference type="PRINTS" id="PR00935">
    <property type="entry name" value="BAND41"/>
</dbReference>
<dbReference type="PRINTS" id="PR00661">
    <property type="entry name" value="ERMFAMILY"/>
</dbReference>
<dbReference type="SMART" id="SM00295">
    <property type="entry name" value="B41"/>
    <property type="match status" value="1"/>
</dbReference>
<dbReference type="SMART" id="SM01195">
    <property type="entry name" value="FA"/>
    <property type="match status" value="1"/>
</dbReference>
<dbReference type="SMART" id="SM01196">
    <property type="entry name" value="FERM_C"/>
    <property type="match status" value="1"/>
</dbReference>
<dbReference type="SMART" id="SM00233">
    <property type="entry name" value="PH"/>
    <property type="match status" value="2"/>
</dbReference>
<dbReference type="SMART" id="SM00325">
    <property type="entry name" value="RhoGEF"/>
    <property type="match status" value="1"/>
</dbReference>
<dbReference type="SUPFAM" id="SSF48065">
    <property type="entry name" value="DBL homology domain (DH-domain)"/>
    <property type="match status" value="1"/>
</dbReference>
<dbReference type="SUPFAM" id="SSF50729">
    <property type="entry name" value="PH domain-like"/>
    <property type="match status" value="3"/>
</dbReference>
<dbReference type="SUPFAM" id="SSF47031">
    <property type="entry name" value="Second domain of FERM"/>
    <property type="match status" value="1"/>
</dbReference>
<dbReference type="SUPFAM" id="SSF54236">
    <property type="entry name" value="Ubiquitin-like"/>
    <property type="match status" value="1"/>
</dbReference>
<dbReference type="PROSITE" id="PS50010">
    <property type="entry name" value="DH_2"/>
    <property type="match status" value="1"/>
</dbReference>
<dbReference type="PROSITE" id="PS00660">
    <property type="entry name" value="FERM_1"/>
    <property type="match status" value="1"/>
</dbReference>
<dbReference type="PROSITE" id="PS50057">
    <property type="entry name" value="FERM_3"/>
    <property type="match status" value="1"/>
</dbReference>
<dbReference type="PROSITE" id="PS50003">
    <property type="entry name" value="PH_DOMAIN"/>
    <property type="match status" value="2"/>
</dbReference>
<organism>
    <name type="scientific">Homo sapiens</name>
    <name type="common">Human</name>
    <dbReference type="NCBI Taxonomy" id="9606"/>
    <lineage>
        <taxon>Eukaryota</taxon>
        <taxon>Metazoa</taxon>
        <taxon>Chordata</taxon>
        <taxon>Craniata</taxon>
        <taxon>Vertebrata</taxon>
        <taxon>Euteleostomi</taxon>
        <taxon>Mammalia</taxon>
        <taxon>Eutheria</taxon>
        <taxon>Euarchontoglires</taxon>
        <taxon>Primates</taxon>
        <taxon>Haplorrhini</taxon>
        <taxon>Catarrhini</taxon>
        <taxon>Hominidae</taxon>
        <taxon>Homo</taxon>
    </lineage>
</organism>
<gene>
    <name type="primary">FARP2</name>
    <name type="synonym">KIAA0793</name>
    <name type="synonym">PLEKHC3</name>
</gene>
<reference key="1">
    <citation type="journal article" date="1998" name="DNA Res.">
        <title>Prediction of the coding sequences of unidentified human genes. XI. The complete sequences of 100 new cDNA clones from brain which code for large proteins in vitro.</title>
        <authorList>
            <person name="Nagase T."/>
            <person name="Ishikawa K."/>
            <person name="Suyama M."/>
            <person name="Kikuno R."/>
            <person name="Miyajima N."/>
            <person name="Tanaka A."/>
            <person name="Kotani H."/>
            <person name="Nomura N."/>
            <person name="Ohara O."/>
        </authorList>
    </citation>
    <scope>NUCLEOTIDE SEQUENCE [LARGE SCALE MRNA] (ISOFORM 1)</scope>
    <source>
        <tissue>Brain</tissue>
    </source>
</reference>
<reference key="2">
    <citation type="journal article" date="2004" name="Nat. Genet.">
        <title>Complete sequencing and characterization of 21,243 full-length human cDNAs.</title>
        <authorList>
            <person name="Ota T."/>
            <person name="Suzuki Y."/>
            <person name="Nishikawa T."/>
            <person name="Otsuki T."/>
            <person name="Sugiyama T."/>
            <person name="Irie R."/>
            <person name="Wakamatsu A."/>
            <person name="Hayashi K."/>
            <person name="Sato H."/>
            <person name="Nagai K."/>
            <person name="Kimura K."/>
            <person name="Makita H."/>
            <person name="Sekine M."/>
            <person name="Obayashi M."/>
            <person name="Nishi T."/>
            <person name="Shibahara T."/>
            <person name="Tanaka T."/>
            <person name="Ishii S."/>
            <person name="Yamamoto J."/>
            <person name="Saito K."/>
            <person name="Kawai Y."/>
            <person name="Isono Y."/>
            <person name="Nakamura Y."/>
            <person name="Nagahari K."/>
            <person name="Murakami K."/>
            <person name="Yasuda T."/>
            <person name="Iwayanagi T."/>
            <person name="Wagatsuma M."/>
            <person name="Shiratori A."/>
            <person name="Sudo H."/>
            <person name="Hosoiri T."/>
            <person name="Kaku Y."/>
            <person name="Kodaira H."/>
            <person name="Kondo H."/>
            <person name="Sugawara M."/>
            <person name="Takahashi M."/>
            <person name="Kanda K."/>
            <person name="Yokoi T."/>
            <person name="Furuya T."/>
            <person name="Kikkawa E."/>
            <person name="Omura Y."/>
            <person name="Abe K."/>
            <person name="Kamihara K."/>
            <person name="Katsuta N."/>
            <person name="Sato K."/>
            <person name="Tanikawa M."/>
            <person name="Yamazaki M."/>
            <person name="Ninomiya K."/>
            <person name="Ishibashi T."/>
            <person name="Yamashita H."/>
            <person name="Murakawa K."/>
            <person name="Fujimori K."/>
            <person name="Tanai H."/>
            <person name="Kimata M."/>
            <person name="Watanabe M."/>
            <person name="Hiraoka S."/>
            <person name="Chiba Y."/>
            <person name="Ishida S."/>
            <person name="Ono Y."/>
            <person name="Takiguchi S."/>
            <person name="Watanabe S."/>
            <person name="Yosida M."/>
            <person name="Hotuta T."/>
            <person name="Kusano J."/>
            <person name="Kanehori K."/>
            <person name="Takahashi-Fujii A."/>
            <person name="Hara H."/>
            <person name="Tanase T.-O."/>
            <person name="Nomura Y."/>
            <person name="Togiya S."/>
            <person name="Komai F."/>
            <person name="Hara R."/>
            <person name="Takeuchi K."/>
            <person name="Arita M."/>
            <person name="Imose N."/>
            <person name="Musashino K."/>
            <person name="Yuuki H."/>
            <person name="Oshima A."/>
            <person name="Sasaki N."/>
            <person name="Aotsuka S."/>
            <person name="Yoshikawa Y."/>
            <person name="Matsunawa H."/>
            <person name="Ichihara T."/>
            <person name="Shiohata N."/>
            <person name="Sano S."/>
            <person name="Moriya S."/>
            <person name="Momiyama H."/>
            <person name="Satoh N."/>
            <person name="Takami S."/>
            <person name="Terashima Y."/>
            <person name="Suzuki O."/>
            <person name="Nakagawa S."/>
            <person name="Senoh A."/>
            <person name="Mizoguchi H."/>
            <person name="Goto Y."/>
            <person name="Shimizu F."/>
            <person name="Wakebe H."/>
            <person name="Hishigaki H."/>
            <person name="Watanabe T."/>
            <person name="Sugiyama A."/>
            <person name="Takemoto M."/>
            <person name="Kawakami B."/>
            <person name="Yamazaki M."/>
            <person name="Watanabe K."/>
            <person name="Kumagai A."/>
            <person name="Itakura S."/>
            <person name="Fukuzumi Y."/>
            <person name="Fujimori Y."/>
            <person name="Komiyama M."/>
            <person name="Tashiro H."/>
            <person name="Tanigami A."/>
            <person name="Fujiwara T."/>
            <person name="Ono T."/>
            <person name="Yamada K."/>
            <person name="Fujii Y."/>
            <person name="Ozaki K."/>
            <person name="Hirao M."/>
            <person name="Ohmori Y."/>
            <person name="Kawabata A."/>
            <person name="Hikiji T."/>
            <person name="Kobatake N."/>
            <person name="Inagaki H."/>
            <person name="Ikema Y."/>
            <person name="Okamoto S."/>
            <person name="Okitani R."/>
            <person name="Kawakami T."/>
            <person name="Noguchi S."/>
            <person name="Itoh T."/>
            <person name="Shigeta K."/>
            <person name="Senba T."/>
            <person name="Matsumura K."/>
            <person name="Nakajima Y."/>
            <person name="Mizuno T."/>
            <person name="Morinaga M."/>
            <person name="Sasaki M."/>
            <person name="Togashi T."/>
            <person name="Oyama M."/>
            <person name="Hata H."/>
            <person name="Watanabe M."/>
            <person name="Komatsu T."/>
            <person name="Mizushima-Sugano J."/>
            <person name="Satoh T."/>
            <person name="Shirai Y."/>
            <person name="Takahashi Y."/>
            <person name="Nakagawa K."/>
            <person name="Okumura K."/>
            <person name="Nagase T."/>
            <person name="Nomura N."/>
            <person name="Kikuchi H."/>
            <person name="Masuho Y."/>
            <person name="Yamashita R."/>
            <person name="Nakai K."/>
            <person name="Yada T."/>
            <person name="Nakamura Y."/>
            <person name="Ohara O."/>
            <person name="Isogai T."/>
            <person name="Sugano S."/>
        </authorList>
    </citation>
    <scope>NUCLEOTIDE SEQUENCE [LARGE SCALE MRNA] (ISOFORM 3)</scope>
    <source>
        <tissue>Placenta</tissue>
    </source>
</reference>
<reference key="3">
    <citation type="journal article" date="2005" name="Nature">
        <title>Generation and annotation of the DNA sequences of human chromosomes 2 and 4.</title>
        <authorList>
            <person name="Hillier L.W."/>
            <person name="Graves T.A."/>
            <person name="Fulton R.S."/>
            <person name="Fulton L.A."/>
            <person name="Pepin K.H."/>
            <person name="Minx P."/>
            <person name="Wagner-McPherson C."/>
            <person name="Layman D."/>
            <person name="Wylie K."/>
            <person name="Sekhon M."/>
            <person name="Becker M.C."/>
            <person name="Fewell G.A."/>
            <person name="Delehaunty K.D."/>
            <person name="Miner T.L."/>
            <person name="Nash W.E."/>
            <person name="Kremitzki C."/>
            <person name="Oddy L."/>
            <person name="Du H."/>
            <person name="Sun H."/>
            <person name="Bradshaw-Cordum H."/>
            <person name="Ali J."/>
            <person name="Carter J."/>
            <person name="Cordes M."/>
            <person name="Harris A."/>
            <person name="Isak A."/>
            <person name="van Brunt A."/>
            <person name="Nguyen C."/>
            <person name="Du F."/>
            <person name="Courtney L."/>
            <person name="Kalicki J."/>
            <person name="Ozersky P."/>
            <person name="Abbott S."/>
            <person name="Armstrong J."/>
            <person name="Belter E.A."/>
            <person name="Caruso L."/>
            <person name="Cedroni M."/>
            <person name="Cotton M."/>
            <person name="Davidson T."/>
            <person name="Desai A."/>
            <person name="Elliott G."/>
            <person name="Erb T."/>
            <person name="Fronick C."/>
            <person name="Gaige T."/>
            <person name="Haakenson W."/>
            <person name="Haglund K."/>
            <person name="Holmes A."/>
            <person name="Harkins R."/>
            <person name="Kim K."/>
            <person name="Kruchowski S.S."/>
            <person name="Strong C.M."/>
            <person name="Grewal N."/>
            <person name="Goyea E."/>
            <person name="Hou S."/>
            <person name="Levy A."/>
            <person name="Martinka S."/>
            <person name="Mead K."/>
            <person name="McLellan M.D."/>
            <person name="Meyer R."/>
            <person name="Randall-Maher J."/>
            <person name="Tomlinson C."/>
            <person name="Dauphin-Kohlberg S."/>
            <person name="Kozlowicz-Reilly A."/>
            <person name="Shah N."/>
            <person name="Swearengen-Shahid S."/>
            <person name="Snider J."/>
            <person name="Strong J.T."/>
            <person name="Thompson J."/>
            <person name="Yoakum M."/>
            <person name="Leonard S."/>
            <person name="Pearman C."/>
            <person name="Trani L."/>
            <person name="Radionenko M."/>
            <person name="Waligorski J.E."/>
            <person name="Wang C."/>
            <person name="Rock S.M."/>
            <person name="Tin-Wollam A.-M."/>
            <person name="Maupin R."/>
            <person name="Latreille P."/>
            <person name="Wendl M.C."/>
            <person name="Yang S.-P."/>
            <person name="Pohl C."/>
            <person name="Wallis J.W."/>
            <person name="Spieth J."/>
            <person name="Bieri T.A."/>
            <person name="Berkowicz N."/>
            <person name="Nelson J.O."/>
            <person name="Osborne J."/>
            <person name="Ding L."/>
            <person name="Meyer R."/>
            <person name="Sabo A."/>
            <person name="Shotland Y."/>
            <person name="Sinha P."/>
            <person name="Wohldmann P.E."/>
            <person name="Cook L.L."/>
            <person name="Hickenbotham M.T."/>
            <person name="Eldred J."/>
            <person name="Williams D."/>
            <person name="Jones T.A."/>
            <person name="She X."/>
            <person name="Ciccarelli F.D."/>
            <person name="Izaurralde E."/>
            <person name="Taylor J."/>
            <person name="Schmutz J."/>
            <person name="Myers R.M."/>
            <person name="Cox D.R."/>
            <person name="Huang X."/>
            <person name="McPherson J.D."/>
            <person name="Mardis E.R."/>
            <person name="Clifton S.W."/>
            <person name="Warren W.C."/>
            <person name="Chinwalla A.T."/>
            <person name="Eddy S.R."/>
            <person name="Marra M.A."/>
            <person name="Ovcharenko I."/>
            <person name="Furey T.S."/>
            <person name="Miller W."/>
            <person name="Eichler E.E."/>
            <person name="Bork P."/>
            <person name="Suyama M."/>
            <person name="Torrents D."/>
            <person name="Waterston R.H."/>
            <person name="Wilson R.K."/>
        </authorList>
    </citation>
    <scope>NUCLEOTIDE SEQUENCE [LARGE SCALE GENOMIC DNA]</scope>
</reference>
<reference key="4">
    <citation type="journal article" date="2004" name="Genome Res.">
        <title>The status, quality, and expansion of the NIH full-length cDNA project: the Mammalian Gene Collection (MGC).</title>
        <authorList>
            <consortium name="The MGC Project Team"/>
        </authorList>
    </citation>
    <scope>NUCLEOTIDE SEQUENCE [LARGE SCALE MRNA] (ISOFORM 2)</scope>
    <source>
        <tissue>Brain</tissue>
    </source>
</reference>
<reference key="5">
    <citation type="journal article" date="2007" name="BMC Genomics">
        <title>The full-ORF clone resource of the German cDNA consortium.</title>
        <authorList>
            <person name="Bechtel S."/>
            <person name="Rosenfelder H."/>
            <person name="Duda A."/>
            <person name="Schmidt C.P."/>
            <person name="Ernst U."/>
            <person name="Wellenreuther R."/>
            <person name="Mehrle A."/>
            <person name="Schuster C."/>
            <person name="Bahr A."/>
            <person name="Bloecker H."/>
            <person name="Heubner D."/>
            <person name="Hoerlein A."/>
            <person name="Michel G."/>
            <person name="Wedler H."/>
            <person name="Koehrer K."/>
            <person name="Ottenwaelder B."/>
            <person name="Poustka A."/>
            <person name="Wiemann S."/>
            <person name="Schupp I."/>
        </authorList>
    </citation>
    <scope>NUCLEOTIDE SEQUENCE [LARGE SCALE MRNA] OF 825-1054</scope>
    <source>
        <tissue>Testis</tissue>
    </source>
</reference>
<reference key="6">
    <citation type="journal article" date="2008" name="Proc. Natl. Acad. Sci. U.S.A.">
        <title>A quantitative atlas of mitotic phosphorylation.</title>
        <authorList>
            <person name="Dephoure N."/>
            <person name="Zhou C."/>
            <person name="Villen J."/>
            <person name="Beausoleil S.A."/>
            <person name="Bakalarski C.E."/>
            <person name="Elledge S.J."/>
            <person name="Gygi S.P."/>
        </authorList>
    </citation>
    <scope>PHOSPHORYLATION [LARGE SCALE ANALYSIS] AT SER-439</scope>
    <scope>IDENTIFICATION BY MASS SPECTROMETRY [LARGE SCALE ANALYSIS]</scope>
    <source>
        <tissue>Cervix carcinoma</tissue>
    </source>
</reference>
<reference key="7">
    <citation type="journal article" date="2009" name="Anal. Chem.">
        <title>Lys-N and trypsin cover complementary parts of the phosphoproteome in a refined SCX-based approach.</title>
        <authorList>
            <person name="Gauci S."/>
            <person name="Helbig A.O."/>
            <person name="Slijper M."/>
            <person name="Krijgsveld J."/>
            <person name="Heck A.J."/>
            <person name="Mohammed S."/>
        </authorList>
    </citation>
    <scope>IDENTIFICATION BY MASS SPECTROMETRY [LARGE SCALE ANALYSIS]</scope>
</reference>
<reference key="8">
    <citation type="journal article" date="2009" name="Sci. Signal.">
        <title>Quantitative phosphoproteomic analysis of T cell receptor signaling reveals system-wide modulation of protein-protein interactions.</title>
        <authorList>
            <person name="Mayya V."/>
            <person name="Lundgren D.H."/>
            <person name="Hwang S.-I."/>
            <person name="Rezaul K."/>
            <person name="Wu L."/>
            <person name="Eng J.K."/>
            <person name="Rodionov V."/>
            <person name="Han D.K."/>
        </authorList>
    </citation>
    <scope>IDENTIFICATION BY MASS SPECTROMETRY [LARGE SCALE ANALYSIS]</scope>
    <source>
        <tissue>Leukemic T-cell</tissue>
    </source>
</reference>
<reference key="9">
    <citation type="journal article" date="2013" name="J. Proteome Res.">
        <title>Toward a comprehensive characterization of a human cancer cell phosphoproteome.</title>
        <authorList>
            <person name="Zhou H."/>
            <person name="Di Palma S."/>
            <person name="Preisinger C."/>
            <person name="Peng M."/>
            <person name="Polat A.N."/>
            <person name="Heck A.J."/>
            <person name="Mohammed S."/>
        </authorList>
    </citation>
    <scope>PHOSPHORYLATION [LARGE SCALE ANALYSIS] AT SER-389 AND SER-439</scope>
    <scope>IDENTIFICATION BY MASS SPECTROMETRY [LARGE SCALE ANALYSIS]</scope>
    <source>
        <tissue>Cervix carcinoma</tissue>
        <tissue>Erythroleukemia</tissue>
    </source>
</reference>